<dbReference type="EMBL" id="AY124674">
    <property type="protein sequence ID" value="AAM77015.1"/>
    <property type="molecule type" value="Genomic_DNA"/>
</dbReference>
<dbReference type="EMBL" id="AY124672">
    <property type="protein sequence ID" value="AAM77015.1"/>
    <property type="status" value="JOINED"/>
    <property type="molecule type" value="Genomic_DNA"/>
</dbReference>
<dbReference type="EMBL" id="AY124673">
    <property type="protein sequence ID" value="AAM77015.1"/>
    <property type="status" value="JOINED"/>
    <property type="molecule type" value="Genomic_DNA"/>
</dbReference>
<dbReference type="EMBL" id="AY124677">
    <property type="protein sequence ID" value="AAM77016.1"/>
    <property type="molecule type" value="Genomic_DNA"/>
</dbReference>
<dbReference type="EMBL" id="AY124675">
    <property type="protein sequence ID" value="AAM77016.1"/>
    <property type="status" value="JOINED"/>
    <property type="molecule type" value="Genomic_DNA"/>
</dbReference>
<dbReference type="EMBL" id="AY124676">
    <property type="protein sequence ID" value="AAM77016.1"/>
    <property type="status" value="JOINED"/>
    <property type="molecule type" value="Genomic_DNA"/>
</dbReference>
<dbReference type="EMBL" id="AY124680">
    <property type="protein sequence ID" value="AAM77017.1"/>
    <property type="molecule type" value="Genomic_DNA"/>
</dbReference>
<dbReference type="EMBL" id="AY124678">
    <property type="protein sequence ID" value="AAM77017.1"/>
    <property type="status" value="JOINED"/>
    <property type="molecule type" value="Genomic_DNA"/>
</dbReference>
<dbReference type="EMBL" id="AY124679">
    <property type="protein sequence ID" value="AAM77017.1"/>
    <property type="status" value="JOINED"/>
    <property type="molecule type" value="Genomic_DNA"/>
</dbReference>
<dbReference type="EMBL" id="AY124683">
    <property type="protein sequence ID" value="AAM77018.1"/>
    <property type="molecule type" value="Genomic_DNA"/>
</dbReference>
<dbReference type="EMBL" id="AY124681">
    <property type="protein sequence ID" value="AAM77018.1"/>
    <property type="status" value="JOINED"/>
    <property type="molecule type" value="Genomic_DNA"/>
</dbReference>
<dbReference type="EMBL" id="AY124682">
    <property type="protein sequence ID" value="AAM77018.1"/>
    <property type="status" value="JOINED"/>
    <property type="molecule type" value="Genomic_DNA"/>
</dbReference>
<dbReference type="EMBL" id="AY124686">
    <property type="protein sequence ID" value="AAM77019.1"/>
    <property type="molecule type" value="Genomic_DNA"/>
</dbReference>
<dbReference type="EMBL" id="AY124684">
    <property type="protein sequence ID" value="AAM77019.1"/>
    <property type="status" value="JOINED"/>
    <property type="molecule type" value="Genomic_DNA"/>
</dbReference>
<dbReference type="EMBL" id="AY124685">
    <property type="protein sequence ID" value="AAM77019.1"/>
    <property type="status" value="JOINED"/>
    <property type="molecule type" value="Genomic_DNA"/>
</dbReference>
<dbReference type="RefSeq" id="XP_014702559.1">
    <property type="nucleotide sequence ID" value="XM_014847073.3"/>
</dbReference>
<dbReference type="RefSeq" id="XP_014702560.1">
    <property type="nucleotide sequence ID" value="XM_014847074.1"/>
</dbReference>
<dbReference type="SMR" id="Q861S3"/>
<dbReference type="Ensembl" id="ENSEAST00005028608.2">
    <property type="protein sequence ID" value="ENSEASP00005026342.1"/>
    <property type="gene ID" value="ENSEASG00005038138.1"/>
</dbReference>
<dbReference type="GeneID" id="106835001"/>
<dbReference type="KEGG" id="eai:106835001"/>
<dbReference type="CTD" id="567"/>
<dbReference type="GeneTree" id="ENSGT00690000102227"/>
<dbReference type="OMA" id="WCVVLVW"/>
<dbReference type="OrthoDB" id="132738at314145"/>
<dbReference type="Proteomes" id="UP000694387">
    <property type="component" value="Chromosome 2"/>
</dbReference>
<dbReference type="GO" id="GO:0005576">
    <property type="term" value="C:extracellular region"/>
    <property type="evidence" value="ECO:0007669"/>
    <property type="project" value="UniProtKB-SubCell"/>
</dbReference>
<dbReference type="GO" id="GO:0042612">
    <property type="term" value="C:MHC class I protein complex"/>
    <property type="evidence" value="ECO:0007669"/>
    <property type="project" value="UniProtKB-KW"/>
</dbReference>
<dbReference type="GO" id="GO:0002474">
    <property type="term" value="P:antigen processing and presentation of peptide antigen via MHC class I"/>
    <property type="evidence" value="ECO:0007669"/>
    <property type="project" value="UniProtKB-KW"/>
</dbReference>
<dbReference type="GO" id="GO:0006955">
    <property type="term" value="P:immune response"/>
    <property type="evidence" value="ECO:0007669"/>
    <property type="project" value="InterPro"/>
</dbReference>
<dbReference type="CDD" id="cd05770">
    <property type="entry name" value="IgC1_beta2m"/>
    <property type="match status" value="1"/>
</dbReference>
<dbReference type="FunFam" id="2.60.40.10:FF:001005">
    <property type="entry name" value="Beta-2-microglobulin"/>
    <property type="match status" value="1"/>
</dbReference>
<dbReference type="Gene3D" id="2.60.40.10">
    <property type="entry name" value="Immunoglobulins"/>
    <property type="match status" value="1"/>
</dbReference>
<dbReference type="InterPro" id="IPR015707">
    <property type="entry name" value="B2Microglobulin"/>
</dbReference>
<dbReference type="InterPro" id="IPR007110">
    <property type="entry name" value="Ig-like_dom"/>
</dbReference>
<dbReference type="InterPro" id="IPR036179">
    <property type="entry name" value="Ig-like_dom_sf"/>
</dbReference>
<dbReference type="InterPro" id="IPR013783">
    <property type="entry name" value="Ig-like_fold"/>
</dbReference>
<dbReference type="InterPro" id="IPR003006">
    <property type="entry name" value="Ig/MHC_CS"/>
</dbReference>
<dbReference type="InterPro" id="IPR003597">
    <property type="entry name" value="Ig_C1-set"/>
</dbReference>
<dbReference type="InterPro" id="IPR050160">
    <property type="entry name" value="MHC/Immunoglobulin"/>
</dbReference>
<dbReference type="PANTHER" id="PTHR19944:SF62">
    <property type="entry name" value="BETA-2-MICROGLOBULIN"/>
    <property type="match status" value="1"/>
</dbReference>
<dbReference type="PANTHER" id="PTHR19944">
    <property type="entry name" value="MHC CLASS II-RELATED"/>
    <property type="match status" value="1"/>
</dbReference>
<dbReference type="Pfam" id="PF07654">
    <property type="entry name" value="C1-set"/>
    <property type="match status" value="1"/>
</dbReference>
<dbReference type="SMART" id="SM00407">
    <property type="entry name" value="IGc1"/>
    <property type="match status" value="1"/>
</dbReference>
<dbReference type="SUPFAM" id="SSF48726">
    <property type="entry name" value="Immunoglobulin"/>
    <property type="match status" value="1"/>
</dbReference>
<dbReference type="PROSITE" id="PS50835">
    <property type="entry name" value="IG_LIKE"/>
    <property type="match status" value="1"/>
</dbReference>
<dbReference type="PROSITE" id="PS00290">
    <property type="entry name" value="IG_MHC"/>
    <property type="match status" value="1"/>
</dbReference>
<reference key="1">
    <citation type="journal article" date="2003" name="Immunogenetics">
        <title>Characterization of the beta(2)-microglobulin gene of the horse.</title>
        <authorList>
            <person name="Tallmadge R.L."/>
            <person name="Lear T.L."/>
            <person name="Johnson A.K."/>
            <person name="Guerin G."/>
            <person name="Millon L.V."/>
            <person name="Carpenter S.L."/>
            <person name="Antczak D.F."/>
        </authorList>
    </citation>
    <scope>NUCLEOTIDE SEQUENCE [GENOMIC DNA]</scope>
</reference>
<gene>
    <name type="primary">B2M</name>
</gene>
<protein>
    <recommendedName>
        <fullName>Beta-2-microglobulin</fullName>
    </recommendedName>
</protein>
<sequence>MARVVALVLLGLLSLTGLEAVQRIPKVQVYSRHPAENGKPNFLNCYVSGFHPPEIEIDLLKNGEKMKVDRSDLSFSKDWSFYLLVHTDFTPNGVDEYSCRVQHSTLKEPLIVKWDRDL</sequence>
<evidence type="ECO:0000250" key="1"/>
<evidence type="ECO:0000255" key="2"/>
<evidence type="ECO:0000255" key="3">
    <source>
        <dbReference type="PROSITE-ProRule" id="PRU00114"/>
    </source>
</evidence>
<evidence type="ECO:0000305" key="4"/>
<proteinExistence type="inferred from homology"/>
<comment type="function">
    <text evidence="1">Component of the class I major histocompatibility complex (MHC). Involved in the presentation of peptide antigens to the immune system (By similarity).</text>
</comment>
<comment type="subunit">
    <text evidence="1">Heterodimer of an alpha chain and a beta chain. Beta-2-microglobulin is the beta-chain of major histocompatibility complex class I molecules (By similarity).</text>
</comment>
<comment type="subcellular location">
    <subcellularLocation>
        <location evidence="1">Secreted</location>
    </subcellularLocation>
</comment>
<comment type="similarity">
    <text evidence="4">Belongs to the beta-2-microglobulin family.</text>
</comment>
<feature type="signal peptide" evidence="2">
    <location>
        <begin position="1"/>
        <end position="20"/>
    </location>
</feature>
<feature type="chain" id="PRO_0000041820" description="Beta-2-microglobulin">
    <location>
        <begin position="21"/>
        <end position="118"/>
    </location>
</feature>
<feature type="domain" description="Ig-like C1-type">
    <location>
        <begin position="25"/>
        <end position="111"/>
    </location>
</feature>
<feature type="disulfide bond" evidence="3">
    <location>
        <begin position="45"/>
        <end position="99"/>
    </location>
</feature>
<name>B2MG_EQUAS</name>
<organism>
    <name type="scientific">Equus asinus</name>
    <name type="common">Donkey</name>
    <name type="synonym">Equus africanus asinus</name>
    <dbReference type="NCBI Taxonomy" id="9793"/>
    <lineage>
        <taxon>Eukaryota</taxon>
        <taxon>Metazoa</taxon>
        <taxon>Chordata</taxon>
        <taxon>Craniata</taxon>
        <taxon>Vertebrata</taxon>
        <taxon>Euteleostomi</taxon>
        <taxon>Mammalia</taxon>
        <taxon>Eutheria</taxon>
        <taxon>Laurasiatheria</taxon>
        <taxon>Perissodactyla</taxon>
        <taxon>Equidae</taxon>
        <taxon>Equus</taxon>
    </lineage>
</organism>
<accession>Q861S3</accession>
<keyword id="KW-1015">Disulfide bond</keyword>
<keyword id="KW-0391">Immunity</keyword>
<keyword id="KW-0393">Immunoglobulin domain</keyword>
<keyword id="KW-0490">MHC I</keyword>
<keyword id="KW-1185">Reference proteome</keyword>
<keyword id="KW-0964">Secreted</keyword>
<keyword id="KW-0732">Signal</keyword>